<reference key="1">
    <citation type="journal article" date="2008" name="Biol. Direct">
        <title>Complete genome sequence of the extremely acidophilic methanotroph isolate V4, Methylacidiphilum infernorum, a representative of the bacterial phylum Verrucomicrobia.</title>
        <authorList>
            <person name="Hou S."/>
            <person name="Makarova K.S."/>
            <person name="Saw J.H."/>
            <person name="Senin P."/>
            <person name="Ly B.V."/>
            <person name="Zhou Z."/>
            <person name="Ren Y."/>
            <person name="Wang J."/>
            <person name="Galperin M.Y."/>
            <person name="Omelchenko M.V."/>
            <person name="Wolf Y.I."/>
            <person name="Yutin N."/>
            <person name="Koonin E.V."/>
            <person name="Stott M.B."/>
            <person name="Mountain B.W."/>
            <person name="Crowe M.A."/>
            <person name="Smirnova A.V."/>
            <person name="Dunfield P.F."/>
            <person name="Feng L."/>
            <person name="Wang L."/>
            <person name="Alam M."/>
        </authorList>
    </citation>
    <scope>NUCLEOTIDE SEQUENCE [LARGE SCALE GENOMIC DNA]</scope>
    <source>
        <strain>Isolate V4</strain>
    </source>
</reference>
<feature type="chain" id="PRO_1000141710" description="DNA-directed RNA polymerase subunit beta">
    <location>
        <begin position="1"/>
        <end position="1289"/>
    </location>
</feature>
<evidence type="ECO:0000255" key="1">
    <source>
        <dbReference type="HAMAP-Rule" id="MF_01321"/>
    </source>
</evidence>
<proteinExistence type="inferred from homology"/>
<organism>
    <name type="scientific">Methylacidiphilum infernorum (isolate V4)</name>
    <name type="common">Methylokorus infernorum (strain V4)</name>
    <dbReference type="NCBI Taxonomy" id="481448"/>
    <lineage>
        <taxon>Bacteria</taxon>
        <taxon>Pseudomonadati</taxon>
        <taxon>Verrucomicrobiota</taxon>
        <taxon>Methylacidiphilae</taxon>
        <taxon>Methylacidiphilales</taxon>
        <taxon>Methylacidiphilaceae</taxon>
        <taxon>Methylacidiphilum (ex Ratnadevi et al. 2023)</taxon>
    </lineage>
</organism>
<protein>
    <recommendedName>
        <fullName evidence="1">DNA-directed RNA polymerase subunit beta</fullName>
        <shortName evidence="1">RNAP subunit beta</shortName>
        <ecNumber evidence="1">2.7.7.6</ecNumber>
    </recommendedName>
    <alternativeName>
        <fullName evidence="1">RNA polymerase subunit beta</fullName>
    </alternativeName>
    <alternativeName>
        <fullName evidence="1">Transcriptase subunit beta</fullName>
    </alternativeName>
</protein>
<sequence length="1289" mass="144000">MNEKIQRINFGKIREGLSLPNLIEHQTKSYADFLQLSVAPQERKAEGLHGVFLEVFPIESYDGKVKLEYVNYEIGESKFSPIDCLRDGKTYAAPLYVTFRLKDEEGVKEEKVYMGELPMMTPQGSFIINGAERVIVNQLHRSPGICFESSFHSNGKTLYSFRIIPDRGSWLEVAFDTNDLLYVYLDRRKKRRKFLITTLLRALAAALSGPSSPLGSGGDEEIIRLFYTVEELNLSEGIDEDKVATKVLVSEVKDPHNPDVVLARAYEPVTRSVVRQLLDVGIQSISVVDVQYDDTLIKCLKKDPTKDPVEALKEIYRRLRPGDPPTESNAKLLLKRLLLDPKRYDLGRVGRYKLNQKLNIQVDPDIRILTWEDLVAATRYLIKLRKGEGITDDIDHLGSRRVRTVGELVANQCRMGLARTERLVKERMTLFDVNTEGMTPQKLINPKALSATIRDFFARSQLSQLMDQINPLSELTHKRRLSALGPGGLSRERAGFEVRDVHPSHYGRICPIETPEGPNIGLIATMASYSRFNDYGILETPYRKVLNGKVTNEIVYFTADQEENYVIAMANTAVSEDGTILDQRVAVRFRREFMEVEREKVEYMDVSPKQIVSVAAGLIPFLEHDDANRALMGSNMQRQAVPLIQPEAPIVGTGIEERVARDIQAVIVSEVDGTVSSVTGKEIIVTPTGSPVEQKKKKSKQGSEREGIVYKLNKFMRSNAGTCINQKPIVKKGQVVKKGDVLADGPSTQNGELALGRNLLVAFMPWNGYNFEDAIIVSERVVKEDLFTSIYIDEFEIVARDTKLGPEEITRDIPNVGDEALKNLGPDGIIRVGAEVKPGDILVGKITPKSETELAPEERLLRAIFGEKAADVKDSSLRVPSGTYGIVMDVRVSSGTARVRKEKINASEAKQKIKEIEERYDQKEEELREELTQALSNILLNEKIPLDVVNVETGEIIIPANRKITKVLLRKMAQAYDKIEIDPSPIRSKIFEIIGNFEAKFEQLRNDRELELDQIESGEDTEPGIIKQVKVFIANKRKLSVGDKMAGRHGNKGVVSKIVPVEDMPYLPDGTPVDIVLNPLGVPSRMNVGQVLETHLGIAAKKLGFNVATPVFDGVKEEKIREFLVKAGMDEDGKSILYDGRTGEMFNQRVVVGMIYMMKLNHMVADKIHARAVGPYSLVTQQPLGGKAQYGGQRFGEMEVWAMEAYGAAYILQELLTVKSDDVQGRTRIYESIVKGENYLETTTPESFNVLIKELQGLCLEVNIGQRSDVIGLSVKPTTPKALSGGEAA</sequence>
<keyword id="KW-0240">DNA-directed RNA polymerase</keyword>
<keyword id="KW-0548">Nucleotidyltransferase</keyword>
<keyword id="KW-0804">Transcription</keyword>
<keyword id="KW-0808">Transferase</keyword>
<name>RPOB_METI4</name>
<dbReference type="EC" id="2.7.7.6" evidence="1"/>
<dbReference type="EMBL" id="CP000975">
    <property type="protein sequence ID" value="ACD82859.1"/>
    <property type="molecule type" value="Genomic_DNA"/>
</dbReference>
<dbReference type="RefSeq" id="WP_012463141.1">
    <property type="nucleotide sequence ID" value="NC_010794.1"/>
</dbReference>
<dbReference type="SMR" id="B3E163"/>
<dbReference type="STRING" id="481448.Minf_0804"/>
<dbReference type="KEGG" id="min:Minf_0804"/>
<dbReference type="eggNOG" id="COG0085">
    <property type="taxonomic scope" value="Bacteria"/>
</dbReference>
<dbReference type="HOGENOM" id="CLU_000524_4_1_0"/>
<dbReference type="OrthoDB" id="9803954at2"/>
<dbReference type="Proteomes" id="UP000009149">
    <property type="component" value="Chromosome"/>
</dbReference>
<dbReference type="GO" id="GO:0000428">
    <property type="term" value="C:DNA-directed RNA polymerase complex"/>
    <property type="evidence" value="ECO:0007669"/>
    <property type="project" value="UniProtKB-KW"/>
</dbReference>
<dbReference type="GO" id="GO:0003677">
    <property type="term" value="F:DNA binding"/>
    <property type="evidence" value="ECO:0007669"/>
    <property type="project" value="UniProtKB-UniRule"/>
</dbReference>
<dbReference type="GO" id="GO:0003899">
    <property type="term" value="F:DNA-directed RNA polymerase activity"/>
    <property type="evidence" value="ECO:0007669"/>
    <property type="project" value="UniProtKB-UniRule"/>
</dbReference>
<dbReference type="GO" id="GO:0032549">
    <property type="term" value="F:ribonucleoside binding"/>
    <property type="evidence" value="ECO:0007669"/>
    <property type="project" value="InterPro"/>
</dbReference>
<dbReference type="GO" id="GO:0006351">
    <property type="term" value="P:DNA-templated transcription"/>
    <property type="evidence" value="ECO:0007669"/>
    <property type="project" value="UniProtKB-UniRule"/>
</dbReference>
<dbReference type="CDD" id="cd00653">
    <property type="entry name" value="RNA_pol_B_RPB2"/>
    <property type="match status" value="1"/>
</dbReference>
<dbReference type="FunFam" id="3.90.1800.10:FF:000001">
    <property type="entry name" value="DNA-directed RNA polymerase subunit beta"/>
    <property type="match status" value="1"/>
</dbReference>
<dbReference type="Gene3D" id="2.40.50.100">
    <property type="match status" value="1"/>
</dbReference>
<dbReference type="Gene3D" id="2.40.50.150">
    <property type="match status" value="1"/>
</dbReference>
<dbReference type="Gene3D" id="3.90.1100.10">
    <property type="match status" value="2"/>
</dbReference>
<dbReference type="Gene3D" id="2.30.150.10">
    <property type="entry name" value="DNA-directed RNA polymerase, beta subunit, external 1 domain"/>
    <property type="match status" value="1"/>
</dbReference>
<dbReference type="Gene3D" id="2.40.270.10">
    <property type="entry name" value="DNA-directed RNA polymerase, subunit 2, domain 6"/>
    <property type="match status" value="3"/>
</dbReference>
<dbReference type="Gene3D" id="3.90.1800.10">
    <property type="entry name" value="RNA polymerase alpha subunit dimerisation domain"/>
    <property type="match status" value="1"/>
</dbReference>
<dbReference type="Gene3D" id="3.90.1110.10">
    <property type="entry name" value="RNA polymerase Rpb2, domain 2"/>
    <property type="match status" value="2"/>
</dbReference>
<dbReference type="HAMAP" id="MF_01321">
    <property type="entry name" value="RNApol_bact_RpoB"/>
    <property type="match status" value="1"/>
</dbReference>
<dbReference type="InterPro" id="IPR042107">
    <property type="entry name" value="DNA-dir_RNA_pol_bsu_ext_1_sf"/>
</dbReference>
<dbReference type="InterPro" id="IPR019462">
    <property type="entry name" value="DNA-dir_RNA_pol_bsu_external_1"/>
</dbReference>
<dbReference type="InterPro" id="IPR015712">
    <property type="entry name" value="DNA-dir_RNA_pol_su2"/>
</dbReference>
<dbReference type="InterPro" id="IPR007120">
    <property type="entry name" value="DNA-dir_RNAP_su2_dom"/>
</dbReference>
<dbReference type="InterPro" id="IPR037033">
    <property type="entry name" value="DNA-dir_RNAP_su2_hyb_sf"/>
</dbReference>
<dbReference type="InterPro" id="IPR010243">
    <property type="entry name" value="RNA_pol_bsu_bac"/>
</dbReference>
<dbReference type="InterPro" id="IPR007121">
    <property type="entry name" value="RNA_pol_bsu_CS"/>
</dbReference>
<dbReference type="InterPro" id="IPR007644">
    <property type="entry name" value="RNA_pol_bsu_protrusion"/>
</dbReference>
<dbReference type="InterPro" id="IPR007642">
    <property type="entry name" value="RNA_pol_Rpb2_2"/>
</dbReference>
<dbReference type="InterPro" id="IPR037034">
    <property type="entry name" value="RNA_pol_Rpb2_2_sf"/>
</dbReference>
<dbReference type="InterPro" id="IPR007645">
    <property type="entry name" value="RNA_pol_Rpb2_3"/>
</dbReference>
<dbReference type="InterPro" id="IPR007641">
    <property type="entry name" value="RNA_pol_Rpb2_7"/>
</dbReference>
<dbReference type="InterPro" id="IPR014724">
    <property type="entry name" value="RNA_pol_RPB2_OB-fold"/>
</dbReference>
<dbReference type="NCBIfam" id="NF001616">
    <property type="entry name" value="PRK00405.1"/>
    <property type="match status" value="1"/>
</dbReference>
<dbReference type="NCBIfam" id="TIGR02013">
    <property type="entry name" value="rpoB"/>
    <property type="match status" value="1"/>
</dbReference>
<dbReference type="PANTHER" id="PTHR20856">
    <property type="entry name" value="DNA-DIRECTED RNA POLYMERASE I SUBUNIT 2"/>
    <property type="match status" value="1"/>
</dbReference>
<dbReference type="Pfam" id="PF04563">
    <property type="entry name" value="RNA_pol_Rpb2_1"/>
    <property type="match status" value="1"/>
</dbReference>
<dbReference type="Pfam" id="PF04561">
    <property type="entry name" value="RNA_pol_Rpb2_2"/>
    <property type="match status" value="1"/>
</dbReference>
<dbReference type="Pfam" id="PF04565">
    <property type="entry name" value="RNA_pol_Rpb2_3"/>
    <property type="match status" value="1"/>
</dbReference>
<dbReference type="Pfam" id="PF10385">
    <property type="entry name" value="RNA_pol_Rpb2_45"/>
    <property type="match status" value="1"/>
</dbReference>
<dbReference type="Pfam" id="PF00562">
    <property type="entry name" value="RNA_pol_Rpb2_6"/>
    <property type="match status" value="1"/>
</dbReference>
<dbReference type="Pfam" id="PF04560">
    <property type="entry name" value="RNA_pol_Rpb2_7"/>
    <property type="match status" value="1"/>
</dbReference>
<dbReference type="SUPFAM" id="SSF64484">
    <property type="entry name" value="beta and beta-prime subunits of DNA dependent RNA-polymerase"/>
    <property type="match status" value="1"/>
</dbReference>
<dbReference type="PROSITE" id="PS01166">
    <property type="entry name" value="RNA_POL_BETA"/>
    <property type="match status" value="1"/>
</dbReference>
<comment type="function">
    <text evidence="1">DNA-dependent RNA polymerase catalyzes the transcription of DNA into RNA using the four ribonucleoside triphosphates as substrates.</text>
</comment>
<comment type="catalytic activity">
    <reaction evidence="1">
        <text>RNA(n) + a ribonucleoside 5'-triphosphate = RNA(n+1) + diphosphate</text>
        <dbReference type="Rhea" id="RHEA:21248"/>
        <dbReference type="Rhea" id="RHEA-COMP:14527"/>
        <dbReference type="Rhea" id="RHEA-COMP:17342"/>
        <dbReference type="ChEBI" id="CHEBI:33019"/>
        <dbReference type="ChEBI" id="CHEBI:61557"/>
        <dbReference type="ChEBI" id="CHEBI:140395"/>
        <dbReference type="EC" id="2.7.7.6"/>
    </reaction>
</comment>
<comment type="subunit">
    <text evidence="1">The RNAP catalytic core consists of 2 alpha, 1 beta, 1 beta' and 1 omega subunit. When a sigma factor is associated with the core the holoenzyme is formed, which can initiate transcription.</text>
</comment>
<comment type="similarity">
    <text evidence="1">Belongs to the RNA polymerase beta chain family.</text>
</comment>
<gene>
    <name evidence="1" type="primary">rpoB</name>
    <name type="ordered locus">Minf_0804</name>
</gene>
<accession>B3E163</accession>